<proteinExistence type="inferred from homology"/>
<name>HFQ_BACVZ</name>
<organism>
    <name type="scientific">Bacillus velezensis (strain DSM 23117 / BGSC 10A6 / LMG 26770 / FZB42)</name>
    <name type="common">Bacillus amyloliquefaciens subsp. plantarum</name>
    <dbReference type="NCBI Taxonomy" id="326423"/>
    <lineage>
        <taxon>Bacteria</taxon>
        <taxon>Bacillati</taxon>
        <taxon>Bacillota</taxon>
        <taxon>Bacilli</taxon>
        <taxon>Bacillales</taxon>
        <taxon>Bacillaceae</taxon>
        <taxon>Bacillus</taxon>
        <taxon>Bacillus amyloliquefaciens group</taxon>
    </lineage>
</organism>
<comment type="function">
    <text evidence="1">RNA chaperone that binds small regulatory RNA (sRNAs) and mRNAs to facilitate mRNA translational regulation in response to envelope stress, environmental stress and changes in metabolite concentrations. Also binds with high specificity to tRNAs.</text>
</comment>
<comment type="subunit">
    <text evidence="1">Homohexamer.</text>
</comment>
<comment type="similarity">
    <text evidence="1">Belongs to the Hfq family.</text>
</comment>
<keyword id="KW-0694">RNA-binding</keyword>
<keyword id="KW-0346">Stress response</keyword>
<feature type="chain" id="PRO_1000025889" description="RNA-binding protein Hfq">
    <location>
        <begin position="1"/>
        <end position="73"/>
    </location>
</feature>
<feature type="domain" description="Sm" evidence="2">
    <location>
        <begin position="8"/>
        <end position="68"/>
    </location>
</feature>
<gene>
    <name evidence="1" type="primary">hfq</name>
    <name type="ordered locus">RBAM_017140</name>
</gene>
<accession>A7Z501</accession>
<sequence length="73" mass="8498">MKPINIQDQFLNQIRKDNTFVTVFLLNGFQLRGQVKGFDNFTVLLETEGKQQLIYKHAISTFAPQKNVQLELE</sequence>
<dbReference type="EMBL" id="CP000560">
    <property type="protein sequence ID" value="ABS74077.1"/>
    <property type="molecule type" value="Genomic_DNA"/>
</dbReference>
<dbReference type="RefSeq" id="WP_003154064.1">
    <property type="nucleotide sequence ID" value="NC_009725.2"/>
</dbReference>
<dbReference type="SMR" id="A7Z501"/>
<dbReference type="GeneID" id="93080850"/>
<dbReference type="KEGG" id="bay:RBAM_017140"/>
<dbReference type="HOGENOM" id="CLU_113688_0_2_9"/>
<dbReference type="Proteomes" id="UP000001120">
    <property type="component" value="Chromosome"/>
</dbReference>
<dbReference type="GO" id="GO:0005829">
    <property type="term" value="C:cytosol"/>
    <property type="evidence" value="ECO:0007669"/>
    <property type="project" value="TreeGrafter"/>
</dbReference>
<dbReference type="GO" id="GO:0003723">
    <property type="term" value="F:RNA binding"/>
    <property type="evidence" value="ECO:0007669"/>
    <property type="project" value="UniProtKB-UniRule"/>
</dbReference>
<dbReference type="GO" id="GO:0006355">
    <property type="term" value="P:regulation of DNA-templated transcription"/>
    <property type="evidence" value="ECO:0007669"/>
    <property type="project" value="InterPro"/>
</dbReference>
<dbReference type="GO" id="GO:0043487">
    <property type="term" value="P:regulation of RNA stability"/>
    <property type="evidence" value="ECO:0007669"/>
    <property type="project" value="TreeGrafter"/>
</dbReference>
<dbReference type="GO" id="GO:0045974">
    <property type="term" value="P:regulation of translation, ncRNA-mediated"/>
    <property type="evidence" value="ECO:0007669"/>
    <property type="project" value="TreeGrafter"/>
</dbReference>
<dbReference type="CDD" id="cd01716">
    <property type="entry name" value="Hfq"/>
    <property type="match status" value="1"/>
</dbReference>
<dbReference type="FunFam" id="2.30.30.100:FF:000012">
    <property type="entry name" value="RNA-binding protein Hfq"/>
    <property type="match status" value="1"/>
</dbReference>
<dbReference type="Gene3D" id="2.30.30.100">
    <property type="match status" value="1"/>
</dbReference>
<dbReference type="HAMAP" id="MF_00436">
    <property type="entry name" value="Hfq"/>
    <property type="match status" value="1"/>
</dbReference>
<dbReference type="InterPro" id="IPR005001">
    <property type="entry name" value="Hfq"/>
</dbReference>
<dbReference type="InterPro" id="IPR010920">
    <property type="entry name" value="LSM_dom_sf"/>
</dbReference>
<dbReference type="InterPro" id="IPR047575">
    <property type="entry name" value="Sm"/>
</dbReference>
<dbReference type="NCBIfam" id="TIGR02383">
    <property type="entry name" value="Hfq"/>
    <property type="match status" value="1"/>
</dbReference>
<dbReference type="NCBIfam" id="NF001602">
    <property type="entry name" value="PRK00395.1"/>
    <property type="match status" value="1"/>
</dbReference>
<dbReference type="PANTHER" id="PTHR34772">
    <property type="entry name" value="RNA-BINDING PROTEIN HFQ"/>
    <property type="match status" value="1"/>
</dbReference>
<dbReference type="PANTHER" id="PTHR34772:SF1">
    <property type="entry name" value="RNA-BINDING PROTEIN HFQ"/>
    <property type="match status" value="1"/>
</dbReference>
<dbReference type="Pfam" id="PF17209">
    <property type="entry name" value="Hfq"/>
    <property type="match status" value="1"/>
</dbReference>
<dbReference type="SUPFAM" id="SSF50182">
    <property type="entry name" value="Sm-like ribonucleoproteins"/>
    <property type="match status" value="1"/>
</dbReference>
<dbReference type="PROSITE" id="PS52002">
    <property type="entry name" value="SM"/>
    <property type="match status" value="1"/>
</dbReference>
<protein>
    <recommendedName>
        <fullName evidence="1">RNA-binding protein Hfq</fullName>
    </recommendedName>
</protein>
<evidence type="ECO:0000255" key="1">
    <source>
        <dbReference type="HAMAP-Rule" id="MF_00436"/>
    </source>
</evidence>
<evidence type="ECO:0000255" key="2">
    <source>
        <dbReference type="PROSITE-ProRule" id="PRU01346"/>
    </source>
</evidence>
<reference key="1">
    <citation type="journal article" date="2007" name="Nat. Biotechnol.">
        <title>Comparative analysis of the complete genome sequence of the plant growth-promoting bacterium Bacillus amyloliquefaciens FZB42.</title>
        <authorList>
            <person name="Chen X.H."/>
            <person name="Koumoutsi A."/>
            <person name="Scholz R."/>
            <person name="Eisenreich A."/>
            <person name="Schneider K."/>
            <person name="Heinemeyer I."/>
            <person name="Morgenstern B."/>
            <person name="Voss B."/>
            <person name="Hess W.R."/>
            <person name="Reva O."/>
            <person name="Junge H."/>
            <person name="Voigt B."/>
            <person name="Jungblut P.R."/>
            <person name="Vater J."/>
            <person name="Suessmuth R."/>
            <person name="Liesegang H."/>
            <person name="Strittmatter A."/>
            <person name="Gottschalk G."/>
            <person name="Borriss R."/>
        </authorList>
    </citation>
    <scope>NUCLEOTIDE SEQUENCE [LARGE SCALE GENOMIC DNA]</scope>
    <source>
        <strain>DSM 23117 / BGSC 10A6 / LMG 26770 / FZB42</strain>
    </source>
</reference>